<gene>
    <name evidence="1" type="primary">hisS</name>
    <name type="ordered locus">ROP_68830</name>
</gene>
<name>SYH_RHOOB</name>
<protein>
    <recommendedName>
        <fullName evidence="1">Histidine--tRNA ligase</fullName>
        <ecNumber evidence="1">6.1.1.21</ecNumber>
    </recommendedName>
    <alternativeName>
        <fullName evidence="1">Histidyl-tRNA synthetase</fullName>
        <shortName evidence="1">HisRS</shortName>
    </alternativeName>
</protein>
<keyword id="KW-0030">Aminoacyl-tRNA synthetase</keyword>
<keyword id="KW-0067">ATP-binding</keyword>
<keyword id="KW-0963">Cytoplasm</keyword>
<keyword id="KW-0436">Ligase</keyword>
<keyword id="KW-0547">Nucleotide-binding</keyword>
<keyword id="KW-0648">Protein biosynthesis</keyword>
<dbReference type="EC" id="6.1.1.21" evidence="1"/>
<dbReference type="EMBL" id="AP011115">
    <property type="protein sequence ID" value="BAH55130.1"/>
    <property type="molecule type" value="Genomic_DNA"/>
</dbReference>
<dbReference type="RefSeq" id="WP_015890560.1">
    <property type="nucleotide sequence ID" value="NC_012522.1"/>
</dbReference>
<dbReference type="SMR" id="C1B4E1"/>
<dbReference type="STRING" id="632772.ROP_68830"/>
<dbReference type="KEGG" id="rop:ROP_68830"/>
<dbReference type="PATRIC" id="fig|632772.20.peg.7173"/>
<dbReference type="HOGENOM" id="CLU_025113_1_1_11"/>
<dbReference type="OrthoDB" id="9800814at2"/>
<dbReference type="Proteomes" id="UP000002212">
    <property type="component" value="Chromosome"/>
</dbReference>
<dbReference type="GO" id="GO:0005737">
    <property type="term" value="C:cytoplasm"/>
    <property type="evidence" value="ECO:0007669"/>
    <property type="project" value="UniProtKB-SubCell"/>
</dbReference>
<dbReference type="GO" id="GO:0005524">
    <property type="term" value="F:ATP binding"/>
    <property type="evidence" value="ECO:0007669"/>
    <property type="project" value="UniProtKB-UniRule"/>
</dbReference>
<dbReference type="GO" id="GO:0004821">
    <property type="term" value="F:histidine-tRNA ligase activity"/>
    <property type="evidence" value="ECO:0007669"/>
    <property type="project" value="UniProtKB-UniRule"/>
</dbReference>
<dbReference type="GO" id="GO:0006427">
    <property type="term" value="P:histidyl-tRNA aminoacylation"/>
    <property type="evidence" value="ECO:0007669"/>
    <property type="project" value="UniProtKB-UniRule"/>
</dbReference>
<dbReference type="CDD" id="cd00773">
    <property type="entry name" value="HisRS-like_core"/>
    <property type="match status" value="1"/>
</dbReference>
<dbReference type="CDD" id="cd00859">
    <property type="entry name" value="HisRS_anticodon"/>
    <property type="match status" value="1"/>
</dbReference>
<dbReference type="Gene3D" id="3.40.50.800">
    <property type="entry name" value="Anticodon-binding domain"/>
    <property type="match status" value="1"/>
</dbReference>
<dbReference type="Gene3D" id="3.30.930.10">
    <property type="entry name" value="Bira Bifunctional Protein, Domain 2"/>
    <property type="match status" value="1"/>
</dbReference>
<dbReference type="HAMAP" id="MF_00127">
    <property type="entry name" value="His_tRNA_synth"/>
    <property type="match status" value="1"/>
</dbReference>
<dbReference type="InterPro" id="IPR006195">
    <property type="entry name" value="aa-tRNA-synth_II"/>
</dbReference>
<dbReference type="InterPro" id="IPR045864">
    <property type="entry name" value="aa-tRNA-synth_II/BPL/LPL"/>
</dbReference>
<dbReference type="InterPro" id="IPR004154">
    <property type="entry name" value="Anticodon-bd"/>
</dbReference>
<dbReference type="InterPro" id="IPR036621">
    <property type="entry name" value="Anticodon-bd_dom_sf"/>
</dbReference>
<dbReference type="InterPro" id="IPR015807">
    <property type="entry name" value="His-tRNA-ligase"/>
</dbReference>
<dbReference type="InterPro" id="IPR041715">
    <property type="entry name" value="HisRS-like_core"/>
</dbReference>
<dbReference type="InterPro" id="IPR004516">
    <property type="entry name" value="HisRS/HisZ"/>
</dbReference>
<dbReference type="InterPro" id="IPR033656">
    <property type="entry name" value="HisRS_anticodon"/>
</dbReference>
<dbReference type="NCBIfam" id="TIGR00442">
    <property type="entry name" value="hisS"/>
    <property type="match status" value="1"/>
</dbReference>
<dbReference type="PANTHER" id="PTHR43707:SF1">
    <property type="entry name" value="HISTIDINE--TRNA LIGASE, MITOCHONDRIAL-RELATED"/>
    <property type="match status" value="1"/>
</dbReference>
<dbReference type="PANTHER" id="PTHR43707">
    <property type="entry name" value="HISTIDYL-TRNA SYNTHETASE"/>
    <property type="match status" value="1"/>
</dbReference>
<dbReference type="Pfam" id="PF03129">
    <property type="entry name" value="HGTP_anticodon"/>
    <property type="match status" value="1"/>
</dbReference>
<dbReference type="Pfam" id="PF13393">
    <property type="entry name" value="tRNA-synt_His"/>
    <property type="match status" value="1"/>
</dbReference>
<dbReference type="PIRSF" id="PIRSF001549">
    <property type="entry name" value="His-tRNA_synth"/>
    <property type="match status" value="1"/>
</dbReference>
<dbReference type="SUPFAM" id="SSF52954">
    <property type="entry name" value="Class II aaRS ABD-related"/>
    <property type="match status" value="1"/>
</dbReference>
<dbReference type="SUPFAM" id="SSF55681">
    <property type="entry name" value="Class II aaRS and biotin synthetases"/>
    <property type="match status" value="1"/>
</dbReference>
<dbReference type="PROSITE" id="PS50862">
    <property type="entry name" value="AA_TRNA_LIGASE_II"/>
    <property type="match status" value="1"/>
</dbReference>
<accession>C1B4E1</accession>
<comment type="catalytic activity">
    <reaction evidence="1">
        <text>tRNA(His) + L-histidine + ATP = L-histidyl-tRNA(His) + AMP + diphosphate + H(+)</text>
        <dbReference type="Rhea" id="RHEA:17313"/>
        <dbReference type="Rhea" id="RHEA-COMP:9665"/>
        <dbReference type="Rhea" id="RHEA-COMP:9689"/>
        <dbReference type="ChEBI" id="CHEBI:15378"/>
        <dbReference type="ChEBI" id="CHEBI:30616"/>
        <dbReference type="ChEBI" id="CHEBI:33019"/>
        <dbReference type="ChEBI" id="CHEBI:57595"/>
        <dbReference type="ChEBI" id="CHEBI:78442"/>
        <dbReference type="ChEBI" id="CHEBI:78527"/>
        <dbReference type="ChEBI" id="CHEBI:456215"/>
        <dbReference type="EC" id="6.1.1.21"/>
    </reaction>
</comment>
<comment type="subunit">
    <text evidence="1">Homodimer.</text>
</comment>
<comment type="subcellular location">
    <subcellularLocation>
        <location evidence="1">Cytoplasm</location>
    </subcellularLocation>
</comment>
<comment type="similarity">
    <text evidence="1">Belongs to the class-II aminoacyl-tRNA synthetase family.</text>
</comment>
<organism>
    <name type="scientific">Rhodococcus opacus (strain B4)</name>
    <dbReference type="NCBI Taxonomy" id="632772"/>
    <lineage>
        <taxon>Bacteria</taxon>
        <taxon>Bacillati</taxon>
        <taxon>Actinomycetota</taxon>
        <taxon>Actinomycetes</taxon>
        <taxon>Mycobacteriales</taxon>
        <taxon>Nocardiaceae</taxon>
        <taxon>Rhodococcus</taxon>
    </lineage>
</organism>
<sequence length="423" mass="45192">MSKASTFSAPKGVPDYVPPQSSEFVAVRDGLTRAARLAGYGHIELPIFEDTGLFARGVGESTDVVSKEMYTFADRGDRSVTLRPEGTAGVMRAVIEHGLDRGQLPVKLSYAGPFFRYERPQAGRYRQLQQVGVEAIGVDDPALDAEVIAVADAGFRGLGLEGFRLEITSLGDDTCRPQYRERLQEFLFALPLDEETRRRAEINPLRVLDDKRKEVREMTADAPLMLDHLSDTAKAHFDEVLAHLDALGVPYVVNPRMVRGLDYYTKTTFEFVHDGLGAQSGIGGGGRYDGLMAQLGGQPLSGIGFGLGVDRTVLALAAEGKTAGSTARCEVFGVPLGEEAKAKLVVIAQQLRAQGIRVDLAYGNRGVKGAMKAADRSGAALALVLGDRDIAEGTVGIKNLATGDQESVSSADVLARVGAILGA</sequence>
<feature type="chain" id="PRO_1000199148" description="Histidine--tRNA ligase">
    <location>
        <begin position="1"/>
        <end position="423"/>
    </location>
</feature>
<proteinExistence type="inferred from homology"/>
<reference key="1">
    <citation type="submission" date="2009-03" db="EMBL/GenBank/DDBJ databases">
        <title>Comparison of the complete genome sequences of Rhodococcus erythropolis PR4 and Rhodococcus opacus B4.</title>
        <authorList>
            <person name="Takarada H."/>
            <person name="Sekine M."/>
            <person name="Hosoyama A."/>
            <person name="Yamada R."/>
            <person name="Fujisawa T."/>
            <person name="Omata S."/>
            <person name="Shimizu A."/>
            <person name="Tsukatani N."/>
            <person name="Tanikawa S."/>
            <person name="Fujita N."/>
            <person name="Harayama S."/>
        </authorList>
    </citation>
    <scope>NUCLEOTIDE SEQUENCE [LARGE SCALE GENOMIC DNA]</scope>
    <source>
        <strain>B4</strain>
    </source>
</reference>
<evidence type="ECO:0000255" key="1">
    <source>
        <dbReference type="HAMAP-Rule" id="MF_00127"/>
    </source>
</evidence>